<dbReference type="EMBL" id="AP008934">
    <property type="protein sequence ID" value="BAE19002.1"/>
    <property type="molecule type" value="Genomic_DNA"/>
</dbReference>
<dbReference type="SMR" id="Q49W57"/>
<dbReference type="KEGG" id="ssp:SSP1857"/>
<dbReference type="eggNOG" id="COG0719">
    <property type="taxonomic scope" value="Bacteria"/>
</dbReference>
<dbReference type="HOGENOM" id="CLU_026231_0_1_9"/>
<dbReference type="OrthoDB" id="9803529at2"/>
<dbReference type="Proteomes" id="UP000006371">
    <property type="component" value="Chromosome"/>
</dbReference>
<dbReference type="GO" id="GO:0016226">
    <property type="term" value="P:iron-sulfur cluster assembly"/>
    <property type="evidence" value="ECO:0007669"/>
    <property type="project" value="InterPro"/>
</dbReference>
<dbReference type="InterPro" id="IPR055346">
    <property type="entry name" value="Fe-S_cluster_assembly_SufBD"/>
</dbReference>
<dbReference type="InterPro" id="IPR010231">
    <property type="entry name" value="SUF_FeS_clus_asmbl_SufB"/>
</dbReference>
<dbReference type="InterPro" id="IPR000825">
    <property type="entry name" value="SUF_FeS_clus_asmbl_SufBD_core"/>
</dbReference>
<dbReference type="InterPro" id="IPR037284">
    <property type="entry name" value="SUF_FeS_clus_asmbl_SufBD_sf"/>
</dbReference>
<dbReference type="InterPro" id="IPR045595">
    <property type="entry name" value="SufBD_N"/>
</dbReference>
<dbReference type="NCBIfam" id="TIGR01980">
    <property type="entry name" value="sufB"/>
    <property type="match status" value="1"/>
</dbReference>
<dbReference type="PANTHER" id="PTHR30508">
    <property type="entry name" value="FES CLUSTER ASSEMBLY PROTEIN SUF"/>
    <property type="match status" value="1"/>
</dbReference>
<dbReference type="PANTHER" id="PTHR30508:SF1">
    <property type="entry name" value="UPF0051 PROTEIN ABCI8, CHLOROPLASTIC-RELATED"/>
    <property type="match status" value="1"/>
</dbReference>
<dbReference type="Pfam" id="PF01458">
    <property type="entry name" value="SUFBD_core"/>
    <property type="match status" value="1"/>
</dbReference>
<dbReference type="Pfam" id="PF19295">
    <property type="entry name" value="SufBD_N"/>
    <property type="match status" value="1"/>
</dbReference>
<dbReference type="SUPFAM" id="SSF101960">
    <property type="entry name" value="Stabilizer of iron transporter SufD"/>
    <property type="match status" value="1"/>
</dbReference>
<name>Y1857_STAS1</name>
<sequence>MAKKAPDVGNYQYGFHDEDVSIFRSERGLTENIVREISNMKEEPEWMLNYRLKSLKQFYKMPMPQWGGDLSELDFDDITYYVKPSENTERSWDEVPEEIKRTFDKLGIPEAEQKYLAGVSAQYESEVVYHNMEKELEDKGIIFKDTDSALRENEELFKQYFSTVVPAADNKFSALNSAVWSGGSFIYVPKNIKLDTPLQAYFRINSENMGQFERTLIIADEGASVNYVEGCTAPVYSTSSLHSAVVEIIVHKDAHVRYTTIQNWANNVYNLVTKRTLVYENGNMEWVDGNLGSKLTMKYPNCVLMGEGAKGSTLSIAFAGKGQVQDAGAKMIHKAPNTSSTIVSKSISKDGGKVVYRGIVHFGRKAKGARSNIECDTLILDNESTSDTIPYNEVFNDNISLEHEAKVSKVSEEQLFYLMSRGISEEEATEMIVMGFIEPFTKELPMEYAVEMNRLIKFEMEGSIG</sequence>
<accession>Q49W57</accession>
<reference key="1">
    <citation type="journal article" date="2005" name="Proc. Natl. Acad. Sci. U.S.A.">
        <title>Whole genome sequence of Staphylococcus saprophyticus reveals the pathogenesis of uncomplicated urinary tract infection.</title>
        <authorList>
            <person name="Kuroda M."/>
            <person name="Yamashita A."/>
            <person name="Hirakawa H."/>
            <person name="Kumano M."/>
            <person name="Morikawa K."/>
            <person name="Higashide M."/>
            <person name="Maruyama A."/>
            <person name="Inose Y."/>
            <person name="Matoba K."/>
            <person name="Toh H."/>
            <person name="Kuhara S."/>
            <person name="Hattori M."/>
            <person name="Ohta T."/>
        </authorList>
    </citation>
    <scope>NUCLEOTIDE SEQUENCE [LARGE SCALE GENOMIC DNA]</scope>
    <source>
        <strain>ATCC 15305 / DSM 20229 / NCIMB 8711 / NCTC 7292 / S-41</strain>
    </source>
</reference>
<gene>
    <name type="ordered locus">SSP1857</name>
</gene>
<comment type="similarity">
    <text evidence="1">Belongs to the iron-sulfur cluster assembly SufBD family.</text>
</comment>
<keyword id="KW-1185">Reference proteome</keyword>
<protein>
    <recommendedName>
        <fullName>Iron-sulfur cluster assembly SufBD family protein SSP1857</fullName>
    </recommendedName>
</protein>
<feature type="chain" id="PRO_0000298962" description="Iron-sulfur cluster assembly SufBD family protein SSP1857">
    <location>
        <begin position="1"/>
        <end position="465"/>
    </location>
</feature>
<evidence type="ECO:0000305" key="1"/>
<proteinExistence type="inferred from homology"/>
<organism>
    <name type="scientific">Staphylococcus saprophyticus subsp. saprophyticus (strain ATCC 15305 / DSM 20229 / NCIMB 8711 / NCTC 7292 / S-41)</name>
    <dbReference type="NCBI Taxonomy" id="342451"/>
    <lineage>
        <taxon>Bacteria</taxon>
        <taxon>Bacillati</taxon>
        <taxon>Bacillota</taxon>
        <taxon>Bacilli</taxon>
        <taxon>Bacillales</taxon>
        <taxon>Staphylococcaceae</taxon>
        <taxon>Staphylococcus</taxon>
    </lineage>
</organism>